<feature type="chain" id="PRO_1000071894" description="Protein RecA">
    <location>
        <begin position="1"/>
        <end position="349"/>
    </location>
</feature>
<feature type="binding site" evidence="1">
    <location>
        <begin position="66"/>
        <end position="73"/>
    </location>
    <ligand>
        <name>ATP</name>
        <dbReference type="ChEBI" id="CHEBI:30616"/>
    </ligand>
</feature>
<accession>A5WGY0</accession>
<evidence type="ECO:0000255" key="1">
    <source>
        <dbReference type="HAMAP-Rule" id="MF_00268"/>
    </source>
</evidence>
<name>RECA_PSYWF</name>
<gene>
    <name evidence="1" type="primary">recA</name>
    <name type="ordered locus">PsycPRwf_1981</name>
</gene>
<sequence>MDDNKAKALKAALGQIEKQFGKNTIMHLGDNSATLDVDVVSTGSLGLDIALGIGGLPKGRIIEIYGPESSGKTTLTLQAIAECQKQGGTCAFIDAEHALDPIYARKLGVNTDDLLVSQPDNGEQALEITDMLVRSGALDMIVIDSVAALTPRAEIEGEMGDSHMGLQARLMSQALRKITGNAKRSNCMVIFINQIRMKIGVMFGSPETTTGGNALKFYASVRLDIRRIGAVKSGDEIIGNQTRVKVIKNKMAPPFRQAEFEITYGEGTNHLAEVIDLGVEIGVVGKAGAWYSYGDEKIGQGKANSVLFLKDNPAIAEEIEAKIRAEKLAVEPEKGAEAVDEVEPESEVE</sequence>
<proteinExistence type="inferred from homology"/>
<dbReference type="EMBL" id="CP000713">
    <property type="protein sequence ID" value="ABQ94921.1"/>
    <property type="molecule type" value="Genomic_DNA"/>
</dbReference>
<dbReference type="SMR" id="A5WGY0"/>
<dbReference type="STRING" id="349106.PsycPRwf_1981"/>
<dbReference type="KEGG" id="prw:PsycPRwf_1981"/>
<dbReference type="eggNOG" id="COG0468">
    <property type="taxonomic scope" value="Bacteria"/>
</dbReference>
<dbReference type="HOGENOM" id="CLU_040469_1_2_6"/>
<dbReference type="GO" id="GO:0005829">
    <property type="term" value="C:cytosol"/>
    <property type="evidence" value="ECO:0007669"/>
    <property type="project" value="TreeGrafter"/>
</dbReference>
<dbReference type="GO" id="GO:0005524">
    <property type="term" value="F:ATP binding"/>
    <property type="evidence" value="ECO:0007669"/>
    <property type="project" value="UniProtKB-UniRule"/>
</dbReference>
<dbReference type="GO" id="GO:0016887">
    <property type="term" value="F:ATP hydrolysis activity"/>
    <property type="evidence" value="ECO:0007669"/>
    <property type="project" value="InterPro"/>
</dbReference>
<dbReference type="GO" id="GO:0140664">
    <property type="term" value="F:ATP-dependent DNA damage sensor activity"/>
    <property type="evidence" value="ECO:0007669"/>
    <property type="project" value="InterPro"/>
</dbReference>
<dbReference type="GO" id="GO:0003684">
    <property type="term" value="F:damaged DNA binding"/>
    <property type="evidence" value="ECO:0007669"/>
    <property type="project" value="UniProtKB-UniRule"/>
</dbReference>
<dbReference type="GO" id="GO:0003697">
    <property type="term" value="F:single-stranded DNA binding"/>
    <property type="evidence" value="ECO:0007669"/>
    <property type="project" value="UniProtKB-UniRule"/>
</dbReference>
<dbReference type="GO" id="GO:0006310">
    <property type="term" value="P:DNA recombination"/>
    <property type="evidence" value="ECO:0007669"/>
    <property type="project" value="UniProtKB-UniRule"/>
</dbReference>
<dbReference type="GO" id="GO:0006281">
    <property type="term" value="P:DNA repair"/>
    <property type="evidence" value="ECO:0007669"/>
    <property type="project" value="UniProtKB-UniRule"/>
</dbReference>
<dbReference type="GO" id="GO:0009432">
    <property type="term" value="P:SOS response"/>
    <property type="evidence" value="ECO:0007669"/>
    <property type="project" value="UniProtKB-UniRule"/>
</dbReference>
<dbReference type="CDD" id="cd00983">
    <property type="entry name" value="RecA"/>
    <property type="match status" value="1"/>
</dbReference>
<dbReference type="FunFam" id="3.40.50.300:FF:000087">
    <property type="entry name" value="Recombinase RecA"/>
    <property type="match status" value="1"/>
</dbReference>
<dbReference type="Gene3D" id="3.40.50.300">
    <property type="entry name" value="P-loop containing nucleotide triphosphate hydrolases"/>
    <property type="match status" value="1"/>
</dbReference>
<dbReference type="HAMAP" id="MF_00268">
    <property type="entry name" value="RecA"/>
    <property type="match status" value="1"/>
</dbReference>
<dbReference type="InterPro" id="IPR003593">
    <property type="entry name" value="AAA+_ATPase"/>
</dbReference>
<dbReference type="InterPro" id="IPR013765">
    <property type="entry name" value="DNA_recomb/repair_RecA"/>
</dbReference>
<dbReference type="InterPro" id="IPR020584">
    <property type="entry name" value="DNA_recomb/repair_RecA_CS"/>
</dbReference>
<dbReference type="InterPro" id="IPR027417">
    <property type="entry name" value="P-loop_NTPase"/>
</dbReference>
<dbReference type="InterPro" id="IPR049261">
    <property type="entry name" value="RecA-like_C"/>
</dbReference>
<dbReference type="InterPro" id="IPR049428">
    <property type="entry name" value="RecA-like_N"/>
</dbReference>
<dbReference type="InterPro" id="IPR020588">
    <property type="entry name" value="RecA_ATP-bd"/>
</dbReference>
<dbReference type="InterPro" id="IPR023400">
    <property type="entry name" value="RecA_C_sf"/>
</dbReference>
<dbReference type="InterPro" id="IPR020587">
    <property type="entry name" value="RecA_monomer-monomer_interface"/>
</dbReference>
<dbReference type="NCBIfam" id="TIGR02012">
    <property type="entry name" value="tigrfam_recA"/>
    <property type="match status" value="1"/>
</dbReference>
<dbReference type="PANTHER" id="PTHR45900:SF1">
    <property type="entry name" value="MITOCHONDRIAL DNA REPAIR PROTEIN RECA HOMOLOG-RELATED"/>
    <property type="match status" value="1"/>
</dbReference>
<dbReference type="PANTHER" id="PTHR45900">
    <property type="entry name" value="RECA"/>
    <property type="match status" value="1"/>
</dbReference>
<dbReference type="Pfam" id="PF00154">
    <property type="entry name" value="RecA"/>
    <property type="match status" value="1"/>
</dbReference>
<dbReference type="Pfam" id="PF21096">
    <property type="entry name" value="RecA_C"/>
    <property type="match status" value="1"/>
</dbReference>
<dbReference type="PRINTS" id="PR00142">
    <property type="entry name" value="RECA"/>
</dbReference>
<dbReference type="SMART" id="SM00382">
    <property type="entry name" value="AAA"/>
    <property type="match status" value="1"/>
</dbReference>
<dbReference type="SUPFAM" id="SSF52540">
    <property type="entry name" value="P-loop containing nucleoside triphosphate hydrolases"/>
    <property type="match status" value="1"/>
</dbReference>
<dbReference type="SUPFAM" id="SSF54752">
    <property type="entry name" value="RecA protein, C-terminal domain"/>
    <property type="match status" value="1"/>
</dbReference>
<dbReference type="PROSITE" id="PS00321">
    <property type="entry name" value="RECA_1"/>
    <property type="match status" value="1"/>
</dbReference>
<dbReference type="PROSITE" id="PS50162">
    <property type="entry name" value="RECA_2"/>
    <property type="match status" value="1"/>
</dbReference>
<dbReference type="PROSITE" id="PS50163">
    <property type="entry name" value="RECA_3"/>
    <property type="match status" value="1"/>
</dbReference>
<organism>
    <name type="scientific">Psychrobacter sp. (strain PRwf-1)</name>
    <dbReference type="NCBI Taxonomy" id="349106"/>
    <lineage>
        <taxon>Bacteria</taxon>
        <taxon>Pseudomonadati</taxon>
        <taxon>Pseudomonadota</taxon>
        <taxon>Gammaproteobacteria</taxon>
        <taxon>Moraxellales</taxon>
        <taxon>Moraxellaceae</taxon>
        <taxon>Psychrobacter</taxon>
    </lineage>
</organism>
<protein>
    <recommendedName>
        <fullName evidence="1">Protein RecA</fullName>
    </recommendedName>
    <alternativeName>
        <fullName evidence="1">Recombinase A</fullName>
    </alternativeName>
</protein>
<keyword id="KW-0067">ATP-binding</keyword>
<keyword id="KW-0963">Cytoplasm</keyword>
<keyword id="KW-0227">DNA damage</keyword>
<keyword id="KW-0233">DNA recombination</keyword>
<keyword id="KW-0234">DNA repair</keyword>
<keyword id="KW-0238">DNA-binding</keyword>
<keyword id="KW-0547">Nucleotide-binding</keyword>
<keyword id="KW-0742">SOS response</keyword>
<comment type="function">
    <text evidence="1">Can catalyze the hydrolysis of ATP in the presence of single-stranded DNA, the ATP-dependent uptake of single-stranded DNA by duplex DNA, and the ATP-dependent hybridization of homologous single-stranded DNAs. It interacts with LexA causing its activation and leading to its autocatalytic cleavage.</text>
</comment>
<comment type="subcellular location">
    <subcellularLocation>
        <location evidence="1">Cytoplasm</location>
    </subcellularLocation>
</comment>
<comment type="similarity">
    <text evidence="1">Belongs to the RecA family.</text>
</comment>
<reference key="1">
    <citation type="submission" date="2007-05" db="EMBL/GenBank/DDBJ databases">
        <title>Complete sequence of chromosome of Psychrobacter sp. PRwf-1.</title>
        <authorList>
            <consortium name="US DOE Joint Genome Institute"/>
            <person name="Copeland A."/>
            <person name="Lucas S."/>
            <person name="Lapidus A."/>
            <person name="Barry K."/>
            <person name="Detter J.C."/>
            <person name="Glavina del Rio T."/>
            <person name="Hammon N."/>
            <person name="Israni S."/>
            <person name="Dalin E."/>
            <person name="Tice H."/>
            <person name="Pitluck S."/>
            <person name="Chain P."/>
            <person name="Malfatti S."/>
            <person name="Shin M."/>
            <person name="Vergez L."/>
            <person name="Schmutz J."/>
            <person name="Larimer F."/>
            <person name="Land M."/>
            <person name="Hauser L."/>
            <person name="Kyrpides N."/>
            <person name="Kim E."/>
            <person name="Tiedje J."/>
            <person name="Richardson P."/>
        </authorList>
    </citation>
    <scope>NUCLEOTIDE SEQUENCE [LARGE SCALE GENOMIC DNA]</scope>
    <source>
        <strain>PRwf-1</strain>
    </source>
</reference>